<protein>
    <recommendedName>
        <fullName evidence="8">Kappa-theraphotoxin-Cg1a 3</fullName>
        <shortName evidence="8">Kappa-TRTX-Cg1a</shortName>
    </recommendedName>
    <alternativeName>
        <fullName>Jingzhaotoxin-11.3</fullName>
        <shortName>JZTX-11.3</shortName>
    </alternativeName>
    <alternativeName>
        <fullName evidence="5 7">Jingzhaotoxin-XI.3</fullName>
        <shortName evidence="5">JZTX-XI.3</shortName>
    </alternativeName>
    <alternativeName>
        <fullName evidence="6">Peptide F4-13.64</fullName>
    </alternativeName>
</protein>
<dbReference type="EMBL" id="EU233871">
    <property type="protein sequence ID" value="ABY71690.1"/>
    <property type="molecule type" value="mRNA"/>
</dbReference>
<dbReference type="SMR" id="B1P1E0"/>
<dbReference type="ArachnoServer" id="AS000043">
    <property type="toxin name" value="kappa-theraphotoxin-Cg1a"/>
</dbReference>
<dbReference type="GO" id="GO:0005576">
    <property type="term" value="C:extracellular region"/>
    <property type="evidence" value="ECO:0007669"/>
    <property type="project" value="UniProtKB-SubCell"/>
</dbReference>
<dbReference type="GO" id="GO:0008200">
    <property type="term" value="F:ion channel inhibitor activity"/>
    <property type="evidence" value="ECO:0007669"/>
    <property type="project" value="InterPro"/>
</dbReference>
<dbReference type="GO" id="GO:0015459">
    <property type="term" value="F:potassium channel regulator activity"/>
    <property type="evidence" value="ECO:0007669"/>
    <property type="project" value="UniProtKB-KW"/>
</dbReference>
<dbReference type="GO" id="GO:0017080">
    <property type="term" value="F:sodium channel regulator activity"/>
    <property type="evidence" value="ECO:0007669"/>
    <property type="project" value="UniProtKB-KW"/>
</dbReference>
<dbReference type="GO" id="GO:0090729">
    <property type="term" value="F:toxin activity"/>
    <property type="evidence" value="ECO:0007669"/>
    <property type="project" value="UniProtKB-KW"/>
</dbReference>
<dbReference type="InterPro" id="IPR011696">
    <property type="entry name" value="Huwentoxin-1"/>
</dbReference>
<dbReference type="Pfam" id="PF07740">
    <property type="entry name" value="Toxin_12"/>
    <property type="match status" value="1"/>
</dbReference>
<dbReference type="SUPFAM" id="SSF57059">
    <property type="entry name" value="omega toxin-like"/>
    <property type="match status" value="1"/>
</dbReference>
<organism>
    <name type="scientific">Chilobrachys guangxiensis</name>
    <name type="common">Chinese earth tiger tarantula</name>
    <name type="synonym">Chilobrachys jingzhao</name>
    <dbReference type="NCBI Taxonomy" id="278060"/>
    <lineage>
        <taxon>Eukaryota</taxon>
        <taxon>Metazoa</taxon>
        <taxon>Ecdysozoa</taxon>
        <taxon>Arthropoda</taxon>
        <taxon>Chelicerata</taxon>
        <taxon>Arachnida</taxon>
        <taxon>Araneae</taxon>
        <taxon>Mygalomorphae</taxon>
        <taxon>Theraphosidae</taxon>
        <taxon>Chilobrachys</taxon>
    </lineage>
</organism>
<evidence type="ECO:0000255" key="1"/>
<evidence type="ECO:0000269" key="2">
    <source>
    </source>
</evidence>
<evidence type="ECO:0000269" key="3">
    <source>
    </source>
</evidence>
<evidence type="ECO:0000269" key="4">
    <source>
    </source>
</evidence>
<evidence type="ECO:0000303" key="5">
    <source>
    </source>
</evidence>
<evidence type="ECO:0000303" key="6">
    <source>
    </source>
</evidence>
<evidence type="ECO:0000303" key="7">
    <source>
    </source>
</evidence>
<evidence type="ECO:0000303" key="8">
    <source>
    </source>
</evidence>
<evidence type="ECO:0000305" key="9"/>
<evidence type="ECO:0000305" key="10">
    <source>
    </source>
</evidence>
<evidence type="ECO:0000305" key="11">
    <source>
    </source>
</evidence>
<sequence>MKVSVLITLAVLGVMFVWASAAELEERGSDQRDSPAWLKSMERIFRSEERECRKMFGGCSVDSDCCAHLGCKPTLKYCAWDGTFGK</sequence>
<accession>B1P1E0</accession>
<feature type="signal peptide" evidence="1">
    <location>
        <begin position="1"/>
        <end position="21"/>
    </location>
</feature>
<feature type="propeptide" id="PRO_0000398409" evidence="2 3">
    <location>
        <begin position="22"/>
        <end position="50"/>
    </location>
</feature>
<feature type="peptide" id="PRO_0000398410" description="Kappa-theraphotoxin-Cg1a 3" evidence="2 3 4">
    <location>
        <begin position="51"/>
        <end position="84"/>
    </location>
</feature>
<feature type="modified residue" description="Phenylalanine amide" evidence="2">
    <location>
        <position position="84"/>
    </location>
</feature>
<feature type="disulfide bond" evidence="2">
    <location>
        <begin position="52"/>
        <end position="66"/>
    </location>
</feature>
<feature type="disulfide bond" evidence="2">
    <location>
        <begin position="59"/>
        <end position="71"/>
    </location>
</feature>
<feature type="disulfide bond" evidence="2">
    <location>
        <begin position="65"/>
        <end position="78"/>
    </location>
</feature>
<reference key="1">
    <citation type="journal article" date="2008" name="Cell. Mol. Life Sci.">
        <title>Molecular diversity and evolution of cystine knot toxins of the tarantula Chilobrachys jingzhao.</title>
        <authorList>
            <person name="Chen J."/>
            <person name="Deng M."/>
            <person name="He Q."/>
            <person name="Meng E."/>
            <person name="Jiang L."/>
            <person name="Liao Z."/>
            <person name="Rong M."/>
            <person name="Liang S."/>
        </authorList>
    </citation>
    <scope>NUCLEOTIDE SEQUENCE [LARGE SCALE MRNA]</scope>
    <source>
        <tissue>Venom gland</tissue>
    </source>
</reference>
<reference key="2">
    <citation type="journal article" date="2007" name="Proteomics">
        <title>Proteomic and peptidomic analysis of the venom from Chinese tarantula Chilobrachys jingzhao.</title>
        <authorList>
            <person name="Liao Z."/>
            <person name="Cao J."/>
            <person name="Li S."/>
            <person name="Yan X."/>
            <person name="Hu W."/>
            <person name="He Q."/>
            <person name="Chen J."/>
            <person name="Tang J."/>
            <person name="Xie J."/>
            <person name="Liang S."/>
        </authorList>
    </citation>
    <scope>PROTEIN SEQUENCE OF 51-84</scope>
    <scope>SUBCELLULAR LOCATION</scope>
    <source>
        <tissue>Venom</tissue>
    </source>
</reference>
<reference key="3">
    <citation type="journal article" date="2006" name="Biochemistry">
        <title>Solution structure and functional characterization of Jingzhaotoxin-XI: a novel gating modifier of both potassium and sodium channels.</title>
        <authorList>
            <person name="Liao Z."/>
            <person name="Yuan C."/>
            <person name="Deng M."/>
            <person name="Li J."/>
            <person name="Chen J."/>
            <person name="Yang Y."/>
            <person name="Hu W."/>
            <person name="Liang S."/>
        </authorList>
    </citation>
    <scope>PROTEIN SEQUENCE OF 51-84</scope>
    <scope>SUBCELLULAR LOCATION</scope>
    <scope>FUNCTION</scope>
    <scope>STRUCTURE BY NMR OF 51-84</scope>
    <scope>AMIDATION AT PHE-84</scope>
    <scope>DISULFIDE BONDS</scope>
    <scope>MASS SPECTROMETRY</scope>
    <source>
        <tissue>Venom</tissue>
    </source>
</reference>
<reference key="4">
    <citation type="journal article" date="2014" name="Toxicon">
        <title>The tarantula toxin jingzhaotoxin-XI (kappa-theraphotoxin-Cj1a) regulates the activation and inactivation of the voltage-gated sodium channel Nav1.5.</title>
        <authorList>
            <person name="Tang C."/>
            <person name="Zhou X."/>
            <person name="Huang Y."/>
            <person name="Zhang Y."/>
            <person name="Hu Z."/>
            <person name="Wang M."/>
            <person name="Chen P."/>
            <person name="Liu Z."/>
            <person name="Liang S."/>
        </authorList>
    </citation>
    <scope>PROTEIN SEQUENCE OF 51-84</scope>
    <scope>FUNCTION</scope>
    <scope>SUBCELLULAR LOCATION</scope>
    <scope>DISULFIDE BOND</scope>
    <source>
        <tissue>Venom</tissue>
    </source>
</reference>
<proteinExistence type="evidence at protein level"/>
<keyword id="KW-0027">Amidation</keyword>
<keyword id="KW-0903">Direct protein sequencing</keyword>
<keyword id="KW-1015">Disulfide bond</keyword>
<keyword id="KW-0872">Ion channel impairing toxin</keyword>
<keyword id="KW-0960">Knottin</keyword>
<keyword id="KW-0632">Potassium channel impairing toxin</keyword>
<keyword id="KW-0964">Secreted</keyword>
<keyword id="KW-0732">Signal</keyword>
<keyword id="KW-0800">Toxin</keyword>
<keyword id="KW-1220">Voltage-gated potassium channel impairing toxin</keyword>
<keyword id="KW-0738">Voltage-gated sodium channel impairing toxin</keyword>
<name>JZ11C_CHIGU</name>
<comment type="function">
    <text evidence="2 4">This toxin acts as a voltage-dependent gating-modifier (PubMed:25240294). It inhibits the sodium conductance (IC(50)=124 nM) and slows the fast inactivation (EC(50)=1180 nM) of Nav1.5/SCN5A (PubMed:17176080, PubMed:25240294). It significantly shifts the activation to more depolarized voltages and decreases the deactivation of Nav1.5 currents upon extreme depolarization, but only slightly affects voltage-dependence of steady-state inactivation (PubMed:17176080, PubMed:25240294). In addition, this toxin causes an approximately five-fold decrease in the rate of recovery from inactivation and an approximately 1.9-fold reduction in the closed-state inactivation rate (PubMed:25240294). This toxin integrates the functions of site 3 toxins (alpha-scorpion toxins) with site 4 toxins (beta-scorpion and spider toxins) by targeting multiple sites on Nav1.5 (PubMed:25240294). Also shows inhibition of voltage-gated potassium channels (5 uM completely inhibits Kv2.1/KCNB1, whereas 5 uM moderately inhibits Kv4.2/KCND2 Kv4.1/KCND1 channels) (PubMed:17176080).</text>
</comment>
<comment type="subcellular location">
    <subcellularLocation>
        <location evidence="2 3 4">Secreted</location>
    </subcellularLocation>
</comment>
<comment type="tissue specificity">
    <text evidence="10 11">Expressed by the venom gland.</text>
</comment>
<comment type="domain">
    <text evidence="4">The presence of a 'disulfide through disulfide knot' structurally defines this protein as a knottin.</text>
</comment>
<comment type="mass spectrometry">
    <text>Monoisotopic mass.</text>
</comment>
<comment type="miscellaneous">
    <text evidence="10">Negative results: does not show effect on Kv1.1/KCNA1, Kv1.2/KCNA2, Kv1.3/KCNA3, Kv1.4/KCNA4, Kv3.1/KCNC1 (all expressed in oocytes), voltage-gated sodium channels (Nav1) (from DRG neurons), and in a range of voltage-gated calcium channels (expressed in rat DRG neurons) (PubMed:17176080). In addition, does not show significant toxic symptoms when injected into mice and into cockroaches (PubMed:17176080).</text>
</comment>
<comment type="similarity">
    <text evidence="9">Belongs to the neurotoxin 10 (Hwtx-1) family. 28 (Jztx-11) subfamily.</text>
</comment>
<comment type="caution">
    <text evidence="9">Several genes are coding for this toxin for which the structure by NMR has been determined. The cross-references to PDB and additional information can be found in entry AC P0C247.</text>
</comment>